<organism>
    <name type="scientific">Arabidopsis thaliana</name>
    <name type="common">Mouse-ear cress</name>
    <dbReference type="NCBI Taxonomy" id="3702"/>
    <lineage>
        <taxon>Eukaryota</taxon>
        <taxon>Viridiplantae</taxon>
        <taxon>Streptophyta</taxon>
        <taxon>Embryophyta</taxon>
        <taxon>Tracheophyta</taxon>
        <taxon>Spermatophyta</taxon>
        <taxon>Magnoliopsida</taxon>
        <taxon>eudicotyledons</taxon>
        <taxon>Gunneridae</taxon>
        <taxon>Pentapetalae</taxon>
        <taxon>rosids</taxon>
        <taxon>malvids</taxon>
        <taxon>Brassicales</taxon>
        <taxon>Brassicaceae</taxon>
        <taxon>Camelineae</taxon>
        <taxon>Arabidopsis</taxon>
    </lineage>
</organism>
<accession>Q9FFZ1</accession>
<dbReference type="EC" id="3.1.1.-"/>
<dbReference type="EMBL" id="AB005230">
    <property type="protein sequence ID" value="BAB11108.1"/>
    <property type="molecule type" value="Genomic_DNA"/>
</dbReference>
<dbReference type="EMBL" id="CP002688">
    <property type="protein sequence ID" value="AED91942.1"/>
    <property type="molecule type" value="Genomic_DNA"/>
</dbReference>
<dbReference type="EMBL" id="CP002688">
    <property type="protein sequence ID" value="AED91943.1"/>
    <property type="molecule type" value="Genomic_DNA"/>
</dbReference>
<dbReference type="EMBL" id="AY056386">
    <property type="protein sequence ID" value="AAL08242.1"/>
    <property type="molecule type" value="mRNA"/>
</dbReference>
<dbReference type="EMBL" id="AY070736">
    <property type="protein sequence ID" value="AAL50077.1"/>
    <property type="molecule type" value="mRNA"/>
</dbReference>
<dbReference type="EMBL" id="AY149934">
    <property type="protein sequence ID" value="AAN31088.1"/>
    <property type="molecule type" value="mRNA"/>
</dbReference>
<dbReference type="EMBL" id="AK317089">
    <property type="protein sequence ID" value="BAH19780.1"/>
    <property type="molecule type" value="mRNA"/>
</dbReference>
<dbReference type="RefSeq" id="NP_196884.1">
    <property type="nucleotide sequence ID" value="NM_121383.4"/>
</dbReference>
<dbReference type="RefSeq" id="NP_850815.1">
    <property type="nucleotide sequence ID" value="NM_180484.3"/>
</dbReference>
<dbReference type="SMR" id="Q9FFZ1"/>
<dbReference type="BioGRID" id="16503">
    <property type="interactions" value="6"/>
</dbReference>
<dbReference type="FunCoup" id="Q9FFZ1">
    <property type="interactions" value="76"/>
</dbReference>
<dbReference type="STRING" id="3702.Q9FFZ1"/>
<dbReference type="ESTHER" id="arath-Q9FFZ1">
    <property type="family name" value="Pheophytinase"/>
</dbReference>
<dbReference type="MEROPS" id="S33.A34"/>
<dbReference type="iPTMnet" id="Q9FFZ1"/>
<dbReference type="PaxDb" id="3702-AT5G13800.1"/>
<dbReference type="ProteomicsDB" id="249344"/>
<dbReference type="EnsemblPlants" id="AT5G13800.1">
    <property type="protein sequence ID" value="AT5G13800.1"/>
    <property type="gene ID" value="AT5G13800"/>
</dbReference>
<dbReference type="EnsemblPlants" id="AT5G13800.2">
    <property type="protein sequence ID" value="AT5G13800.2"/>
    <property type="gene ID" value="AT5G13800"/>
</dbReference>
<dbReference type="GeneID" id="831225"/>
<dbReference type="Gramene" id="AT5G13800.1">
    <property type="protein sequence ID" value="AT5G13800.1"/>
    <property type="gene ID" value="AT5G13800"/>
</dbReference>
<dbReference type="Gramene" id="AT5G13800.2">
    <property type="protein sequence ID" value="AT5G13800.2"/>
    <property type="gene ID" value="AT5G13800"/>
</dbReference>
<dbReference type="KEGG" id="ath:AT5G13800"/>
<dbReference type="Araport" id="AT5G13800"/>
<dbReference type="TAIR" id="AT5G13800">
    <property type="gene designation" value="PPH"/>
</dbReference>
<dbReference type="eggNOG" id="KOG1454">
    <property type="taxonomic scope" value="Eukaryota"/>
</dbReference>
<dbReference type="HOGENOM" id="CLU_020336_21_0_1"/>
<dbReference type="InParanoid" id="Q9FFZ1"/>
<dbReference type="PhylomeDB" id="Q9FFZ1"/>
<dbReference type="BioCyc" id="ARA:AT5G13800-MONOMER"/>
<dbReference type="BioCyc" id="MetaCyc:AT5G13800-MONOMER"/>
<dbReference type="PRO" id="PR:Q9FFZ1"/>
<dbReference type="Proteomes" id="UP000006548">
    <property type="component" value="Chromosome 5"/>
</dbReference>
<dbReference type="ExpressionAtlas" id="Q9FFZ1">
    <property type="expression patterns" value="baseline and differential"/>
</dbReference>
<dbReference type="GO" id="GO:0009507">
    <property type="term" value="C:chloroplast"/>
    <property type="evidence" value="ECO:0000314"/>
    <property type="project" value="TAIR"/>
</dbReference>
<dbReference type="GO" id="GO:0009570">
    <property type="term" value="C:chloroplast stroma"/>
    <property type="evidence" value="ECO:0007669"/>
    <property type="project" value="UniProtKB-SubCell"/>
</dbReference>
<dbReference type="GO" id="GO:0009535">
    <property type="term" value="C:chloroplast thylakoid membrane"/>
    <property type="evidence" value="ECO:0007669"/>
    <property type="project" value="UniProtKB-SubCell"/>
</dbReference>
<dbReference type="GO" id="GO:0080124">
    <property type="term" value="F:pheophytinase activity"/>
    <property type="evidence" value="ECO:0000314"/>
    <property type="project" value="TAIR"/>
</dbReference>
<dbReference type="GO" id="GO:0015996">
    <property type="term" value="P:chlorophyll catabolic process"/>
    <property type="evidence" value="ECO:0000315"/>
    <property type="project" value="TAIR"/>
</dbReference>
<dbReference type="FunFam" id="3.40.50.1820:FF:000136">
    <property type="entry name" value="Pheophytinase, chloroplastic"/>
    <property type="match status" value="1"/>
</dbReference>
<dbReference type="Gene3D" id="3.40.50.1820">
    <property type="entry name" value="alpha/beta hydrolase"/>
    <property type="match status" value="1"/>
</dbReference>
<dbReference type="InterPro" id="IPR000073">
    <property type="entry name" value="AB_hydrolase_1"/>
</dbReference>
<dbReference type="InterPro" id="IPR029058">
    <property type="entry name" value="AB_hydrolase_fold"/>
</dbReference>
<dbReference type="InterPro" id="IPR044211">
    <property type="entry name" value="PPH_chloroplastic"/>
</dbReference>
<dbReference type="PANTHER" id="PTHR47280">
    <property type="entry name" value="PHEOPHYTINASE, CHLOROPLASTIC"/>
    <property type="match status" value="1"/>
</dbReference>
<dbReference type="PANTHER" id="PTHR47280:SF1">
    <property type="entry name" value="PHEOPHYTINASE, CHLOROPLASTIC"/>
    <property type="match status" value="1"/>
</dbReference>
<dbReference type="Pfam" id="PF12697">
    <property type="entry name" value="Abhydrolase_6"/>
    <property type="match status" value="1"/>
</dbReference>
<dbReference type="SUPFAM" id="SSF53474">
    <property type="entry name" value="alpha/beta-Hydrolases"/>
    <property type="match status" value="1"/>
</dbReference>
<comment type="function">
    <text evidence="1 2">Alpha/beta hydrolase dephytylating specifically the Mg-free chlorophyll pigment (pheophytin), yielding pheophorbide. No activity on chlorophyll. Belongs to the chlorophyll catabolic enzymes (CCEs).</text>
</comment>
<comment type="biophysicochemical properties">
    <temperatureDependence>
        <text evidence="1">Optimum temperature is 25-30 degrees Celsius.</text>
    </temperatureDependence>
</comment>
<comment type="subunit">
    <text evidence="3 4">Interacts with HCAR, RCCR, PAO and the LHCII complex. Part of a SGR1-CCE-LHCII complex, which acts in chlorophyll breakdown.</text>
</comment>
<comment type="subcellular location">
    <subcellularLocation>
        <location>Plastid</location>
        <location>Chloroplast thylakoid membrane</location>
    </subcellularLocation>
    <subcellularLocation>
        <location>Plastid</location>
        <location>Chloroplast stroma</location>
    </subcellularLocation>
</comment>
<comment type="developmental stage">
    <text evidence="4">Up-regulated during senescence.</text>
</comment>
<comment type="disruption phenotype">
    <text evidence="1 2">Stay-green phenotype during leaf senescence. Delayed chlorophyll breakdown during developmental senescence.</text>
</comment>
<comment type="similarity">
    <text evidence="5">Belongs to the AB hydrolase superfamily.</text>
</comment>
<keyword id="KW-0881">Chlorophyll catabolism</keyword>
<keyword id="KW-0150">Chloroplast</keyword>
<keyword id="KW-0378">Hydrolase</keyword>
<keyword id="KW-0472">Membrane</keyword>
<keyword id="KW-0934">Plastid</keyword>
<keyword id="KW-1185">Reference proteome</keyword>
<keyword id="KW-0793">Thylakoid</keyword>
<keyword id="KW-0809">Transit peptide</keyword>
<reference key="1">
    <citation type="journal article" date="1997" name="DNA Res.">
        <title>Structural analysis of Arabidopsis thaliana chromosome 5. I. Sequence features of the 1.6 Mb regions covered by twenty physically assigned P1 clones.</title>
        <authorList>
            <person name="Sato S."/>
            <person name="Kotani H."/>
            <person name="Nakamura Y."/>
            <person name="Kaneko T."/>
            <person name="Asamizu E."/>
            <person name="Fukami M."/>
            <person name="Miyajima N."/>
            <person name="Tabata S."/>
        </authorList>
    </citation>
    <scope>NUCLEOTIDE SEQUENCE [LARGE SCALE GENOMIC DNA]</scope>
    <source>
        <strain>cv. Columbia</strain>
    </source>
</reference>
<reference key="2">
    <citation type="journal article" date="2017" name="Plant J.">
        <title>Araport11: a complete reannotation of the Arabidopsis thaliana reference genome.</title>
        <authorList>
            <person name="Cheng C.Y."/>
            <person name="Krishnakumar V."/>
            <person name="Chan A.P."/>
            <person name="Thibaud-Nissen F."/>
            <person name="Schobel S."/>
            <person name="Town C.D."/>
        </authorList>
    </citation>
    <scope>GENOME REANNOTATION</scope>
    <source>
        <strain>cv. Columbia</strain>
    </source>
</reference>
<reference key="3">
    <citation type="journal article" date="2003" name="Science">
        <title>Empirical analysis of transcriptional activity in the Arabidopsis genome.</title>
        <authorList>
            <person name="Yamada K."/>
            <person name="Lim J."/>
            <person name="Dale J.M."/>
            <person name="Chen H."/>
            <person name="Shinn P."/>
            <person name="Palm C.J."/>
            <person name="Southwick A.M."/>
            <person name="Wu H.C."/>
            <person name="Kim C.J."/>
            <person name="Nguyen M."/>
            <person name="Pham P.K."/>
            <person name="Cheuk R.F."/>
            <person name="Karlin-Newmann G."/>
            <person name="Liu S.X."/>
            <person name="Lam B."/>
            <person name="Sakano H."/>
            <person name="Wu T."/>
            <person name="Yu G."/>
            <person name="Miranda M."/>
            <person name="Quach H.L."/>
            <person name="Tripp M."/>
            <person name="Chang C.H."/>
            <person name="Lee J.M."/>
            <person name="Toriumi M.J."/>
            <person name="Chan M.M."/>
            <person name="Tang C.C."/>
            <person name="Onodera C.S."/>
            <person name="Deng J.M."/>
            <person name="Akiyama K."/>
            <person name="Ansari Y."/>
            <person name="Arakawa T."/>
            <person name="Banh J."/>
            <person name="Banno F."/>
            <person name="Bowser L."/>
            <person name="Brooks S.Y."/>
            <person name="Carninci P."/>
            <person name="Chao Q."/>
            <person name="Choy N."/>
            <person name="Enju A."/>
            <person name="Goldsmith A.D."/>
            <person name="Gurjal M."/>
            <person name="Hansen N.F."/>
            <person name="Hayashizaki Y."/>
            <person name="Johnson-Hopson C."/>
            <person name="Hsuan V.W."/>
            <person name="Iida K."/>
            <person name="Karnes M."/>
            <person name="Khan S."/>
            <person name="Koesema E."/>
            <person name="Ishida J."/>
            <person name="Jiang P.X."/>
            <person name="Jones T."/>
            <person name="Kawai J."/>
            <person name="Kamiya A."/>
            <person name="Meyers C."/>
            <person name="Nakajima M."/>
            <person name="Narusaka M."/>
            <person name="Seki M."/>
            <person name="Sakurai T."/>
            <person name="Satou M."/>
            <person name="Tamse R."/>
            <person name="Vaysberg M."/>
            <person name="Wallender E.K."/>
            <person name="Wong C."/>
            <person name="Yamamura Y."/>
            <person name="Yuan S."/>
            <person name="Shinozaki K."/>
            <person name="Davis R.W."/>
            <person name="Theologis A."/>
            <person name="Ecker J.R."/>
        </authorList>
    </citation>
    <scope>NUCLEOTIDE SEQUENCE [LARGE SCALE MRNA]</scope>
    <source>
        <strain>cv. Columbia</strain>
    </source>
</reference>
<reference key="4">
    <citation type="journal article" date="2009" name="DNA Res.">
        <title>Analysis of multiple occurrences of alternative splicing events in Arabidopsis thaliana using novel sequenced full-length cDNAs.</title>
        <authorList>
            <person name="Iida K."/>
            <person name="Fukami-Kobayashi K."/>
            <person name="Toyoda A."/>
            <person name="Sakaki Y."/>
            <person name="Kobayashi M."/>
            <person name="Seki M."/>
            <person name="Shinozaki K."/>
        </authorList>
    </citation>
    <scope>NUCLEOTIDE SEQUENCE [LARGE SCALE MRNA]</scope>
    <source>
        <strain>cv. Columbia</strain>
        <tissue>Rosette leaf</tissue>
    </source>
</reference>
<reference key="5">
    <citation type="journal article" date="2009" name="Plant Cell">
        <title>Pheophytin pheophorbide hydrolase (pheophytinase) is involved in chlorophyll breakdown during leaf senescence in Arabidopsis.</title>
        <authorList>
            <person name="Schelbert S."/>
            <person name="Aubry S."/>
            <person name="Burla B."/>
            <person name="Agne B."/>
            <person name="Kessler F."/>
            <person name="Krupinska K."/>
            <person name="Hortensteiner S."/>
        </authorList>
    </citation>
    <scope>FUNCTION</scope>
    <scope>DISRUPTION PHENOTYPE</scope>
    <scope>SUBSTRATE SPECIFICITY</scope>
    <scope>MUTAGENESIS OF SER-221</scope>
    <scope>SUBCELLULAR LOCATION</scope>
    <scope>BIOPHYSICOCHEMICAL PROPERTIES</scope>
</reference>
<reference key="6">
    <citation type="journal article" date="2010" name="J. Integr. Plant Biol.">
        <title>Reverse genetic identification of CRN1 and its distinctive role in chlorophyll degradation in Arabidopsis.</title>
        <authorList>
            <person name="Ren G."/>
            <person name="Zhou Q."/>
            <person name="Wu S."/>
            <person name="Zhang Y."/>
            <person name="Zhang L."/>
            <person name="Huang J."/>
            <person name="Sun Z."/>
            <person name="Kuai B."/>
        </authorList>
    </citation>
    <scope>FUNCTION</scope>
    <scope>DISRUPTION PHENOTYPE</scope>
</reference>
<reference key="7">
    <citation type="journal article" date="2012" name="Plant Cell">
        <title>STAY-GREEN and chlorophyll catabolic enzymes interact at light-harvesting complex II for chlorophyll detoxification during leaf senescence in Arabidopsis.</title>
        <authorList>
            <person name="Sakuraba Y."/>
            <person name="Schelbert S."/>
            <person name="Park S.Y."/>
            <person name="Han S.H."/>
            <person name="Lee B.D."/>
            <person name="Andres C.B."/>
            <person name="Kessler F."/>
            <person name="Hortensteiner S."/>
            <person name="Paek N.C."/>
        </authorList>
    </citation>
    <scope>SUBCELLULAR LOCATION</scope>
    <scope>INTERACTION WITH RCCR; PAO AND LHCII COMPLEX</scope>
</reference>
<reference key="8">
    <citation type="journal article" date="2013" name="Biochem. Biophys. Res. Commun.">
        <title>7-Hydroxymethyl chlorophyll a reductase functions in metabolic channeling of chlorophyll breakdown intermediates during leaf senescence.</title>
        <authorList>
            <person name="Sakuraba Y."/>
            <person name="Kim Y.S."/>
            <person name="Yoo S.C."/>
            <person name="Hortensteiner S."/>
            <person name="Paek N.C."/>
        </authorList>
    </citation>
    <scope>INTERACTION WITH HCAR</scope>
    <scope>DEVELOPMENTAL STAGE</scope>
</reference>
<protein>
    <recommendedName>
        <fullName>Pheophytinase, chloroplastic</fullName>
        <ecNumber>3.1.1.-</ecNumber>
    </recommendedName>
    <alternativeName>
        <fullName>Pheophytin pheophorbide hydrolase</fullName>
    </alternativeName>
    <alternativeName>
        <fullName>Protein CO-REGULATED WITH NYE1</fullName>
    </alternativeName>
</protein>
<proteinExistence type="evidence at protein level"/>
<sequence length="484" mass="54572">MEIISLNVVPQCSVVTWSSKLATKRLVPNRSSLLFSGVKKSRLVIRSGNSDGYVVGENDDLGRIARRGESTSKVLIPGLPDESNGEIAARISHSHCEWKPKLRVHYEKAGCDNLDAPAVLFLPGFGVGSFHYEKQLTDLGRDYRVWAIDFLGQGLSLPTEDPTTMTEETSSSEDKEPFWGFGDKTEPWADQLVFSLDLWRDQVQYFVEEVIGEPVYIAGNSLGGYVALYFAATHPHLVKGVTLLNATPFWGFFPNPVRSPKLARLFPWPGAFPLPERVKKITELVWQKISDPESIAEILKQVYTDHSINVDKVFSRIVEVTQHPAAAASFASIMLAPGGELSFSEALSRCKENNVQICLMYGREDPWVRPLWGKKIKKEIPNAPYYEISPAGHCPHDEVPEVVNYLMRGWIKHLESGGFEALPLLEDTEEDWEESRIGREIEFPRDGWKKAVNLWLYGSNYTYWRGVRESFRSSFIRVFGGKSA</sequence>
<gene>
    <name type="primary">PPH</name>
    <name type="synonym">CRN1</name>
    <name type="ordered locus">At5g13800</name>
    <name type="ORF">MAC12.25</name>
</gene>
<feature type="transit peptide" description="Chloroplast" evidence="5">
    <location>
        <begin position="1"/>
        <end position="47"/>
    </location>
</feature>
<feature type="chain" id="PRO_0000425230" description="Pheophytinase, chloroplastic">
    <location>
        <begin position="48"/>
        <end position="484"/>
    </location>
</feature>
<feature type="mutagenesis site" description="Loss of catalytic activity." evidence="1">
    <original>S</original>
    <variation>A</variation>
    <location>
        <position position="221"/>
    </location>
</feature>
<name>PPH_ARATH</name>
<evidence type="ECO:0000269" key="1">
    <source>
    </source>
</evidence>
<evidence type="ECO:0000269" key="2">
    <source>
    </source>
</evidence>
<evidence type="ECO:0000269" key="3">
    <source>
    </source>
</evidence>
<evidence type="ECO:0000269" key="4">
    <source>
    </source>
</evidence>
<evidence type="ECO:0000305" key="5"/>